<protein>
    <recommendedName>
        <fullName>Gene 13 protein</fullName>
    </recommendedName>
    <alternativeName>
        <fullName>Gp13</fullName>
    </alternativeName>
</protein>
<proteinExistence type="inferred from homology"/>
<comment type="similarity">
    <text evidence="1">Belongs to the phage terminase family.</text>
</comment>
<evidence type="ECO:0000305" key="1"/>
<feature type="chain" id="PRO_0000164715" description="Gene 13 protein">
    <location>
        <begin position="1"/>
        <end position="593"/>
    </location>
</feature>
<gene>
    <name type="primary">13</name>
</gene>
<reference key="1">
    <citation type="journal article" date="1993" name="Mol. Microbiol.">
        <title>DNA sequence, structure and gene expression of mycobacteriophage L5: a phage system for mycobacterial genetics.</title>
        <authorList>
            <person name="Hatfull G.F."/>
            <person name="Sarkis G.J."/>
        </authorList>
    </citation>
    <scope>NUCLEOTIDE SEQUENCE [LARGE SCALE GENOMIC DNA]</scope>
</reference>
<organismHost>
    <name type="scientific">Mycobacterium</name>
    <dbReference type="NCBI Taxonomy" id="1763"/>
</organismHost>
<organism>
    <name type="scientific">Mycobacterium phage L5</name>
    <name type="common">Mycobacteriophage L5</name>
    <dbReference type="NCBI Taxonomy" id="31757"/>
    <lineage>
        <taxon>Viruses</taxon>
        <taxon>Duplodnaviria</taxon>
        <taxon>Heunggongvirae</taxon>
        <taxon>Uroviricota</taxon>
        <taxon>Caudoviricetes</taxon>
        <taxon>Fromanvirus</taxon>
    </lineage>
</organism>
<name>VG13_BPML5</name>
<sequence length="593" mass="66219">MSLNNHHPELAPSPPHIIGPSWQKTVDGEWYLPEKTLGWGVLKWLSEYVNTPGGHDDPNRLATLIALSEAGLLDNENMFIPTDEQVRLVLWWYAVDDQGQYIYREGVIRRLKGWGKDPFTAALCLAELCGPVAFSHFDADGNPVGKPRSAAWITVAAVSQDQTKNTFSLFPVMISKKLKAEYGLDVNRFIIYSAAGGRIEAATSSPASMEGNRPTFVVQNETQWWGQGPDGKVNEGHAMAEVIEGNMTKVEGSRTLSICNAHIPGTETVAEKAWDEYQKVQAGDSVDTGMMYDALEAPADTPVSEIPPQKEDPEGFEKGIEKLREGLLIARGDSTWLPIDDIIKSILSTKNPITESRRKFLNQVNAAEDSWLSPQEWNRCQVDLAKYLDKHGREFAPLQRGDRITLGFDGSKSNDWTALVGCRVSDGLLFVIDIWDPQKYGGEVPREDVDAKVHSAFAHYDVVAFRADVKEFEAYVDQWGRTYKKKLKVNASPNNPVAFDMRGQQKRFAFDCERLEDAVLEGEVWHDGNPVLRQHVLNAKRHPTNYDAIAIRKVTKDSSKKIDAAVCAVLAFGARQDYLMSKKARSGRVVMVR</sequence>
<keyword id="KW-1185">Reference proteome</keyword>
<dbReference type="EMBL" id="Z18946">
    <property type="protein sequence ID" value="CAA79389.1"/>
    <property type="molecule type" value="Genomic_DNA"/>
</dbReference>
<dbReference type="PIR" id="S30958">
    <property type="entry name" value="S30958"/>
</dbReference>
<dbReference type="RefSeq" id="NP_039677.1">
    <property type="nucleotide sequence ID" value="NC_001335.1"/>
</dbReference>
<dbReference type="SMR" id="Q05219"/>
<dbReference type="GeneID" id="2942932"/>
<dbReference type="KEGG" id="vg:2942932"/>
<dbReference type="OrthoDB" id="1044at10239"/>
<dbReference type="Proteomes" id="UP000002123">
    <property type="component" value="Genome"/>
</dbReference>
<accession>Q05219</accession>